<gene>
    <name type="primary">MEP</name>
</gene>
<proteinExistence type="evidence at protein level"/>
<evidence type="ECO:0000269" key="1">
    <source>
    </source>
</evidence>
<evidence type="ECO:0000269" key="2">
    <source>
    </source>
</evidence>
<evidence type="ECO:0000269" key="3">
    <source>
    </source>
</evidence>
<evidence type="ECO:0000269" key="4">
    <source>
    </source>
</evidence>
<evidence type="ECO:0000305" key="5"/>
<evidence type="ECO:0007829" key="6">
    <source>
        <dbReference type="PDB" id="1G12"/>
    </source>
</evidence>
<feature type="signal peptide" evidence="2">
    <location>
        <begin position="1"/>
        <end position="18"/>
    </location>
</feature>
<feature type="propeptide" id="PRO_0000043399" evidence="3 4">
    <location>
        <begin position="19"/>
        <end position="181"/>
    </location>
</feature>
<feature type="chain" id="PRO_0000043400" description="Peptidyl-Lys metalloendopeptidase">
    <location>
        <begin position="182"/>
        <end position="348"/>
    </location>
</feature>
<feature type="active site" evidence="1">
    <location>
        <position position="299"/>
    </location>
</feature>
<feature type="binding site" evidence="1">
    <location>
        <position position="298"/>
    </location>
    <ligand>
        <name>Zn(2+)</name>
        <dbReference type="ChEBI" id="CHEBI:29105"/>
        <note>catalytic</note>
    </ligand>
</feature>
<feature type="binding site" evidence="1">
    <location>
        <position position="302"/>
    </location>
    <ligand>
        <name>Zn(2+)</name>
        <dbReference type="ChEBI" id="CHEBI:29105"/>
        <note>catalytic</note>
    </ligand>
</feature>
<feature type="binding site" evidence="1">
    <location>
        <position position="311"/>
    </location>
    <ligand>
        <name>Zn(2+)</name>
        <dbReference type="ChEBI" id="CHEBI:29105"/>
        <note>catalytic</note>
    </ligand>
</feature>
<feature type="site" description="Transition state stabilizer" evidence="5">
    <location>
        <position position="314"/>
    </location>
</feature>
<feature type="glycosylation site" description="O-linked (Man) threonine; partial" evidence="4">
    <location>
        <position position="223"/>
    </location>
</feature>
<feature type="disulfide bond" evidence="1">
    <location>
        <begin position="186"/>
        <end position="256"/>
    </location>
</feature>
<feature type="disulfide bond" evidence="1">
    <location>
        <begin position="258"/>
        <end position="278"/>
    </location>
</feature>
<feature type="strand" evidence="6">
    <location>
        <begin position="183"/>
        <end position="185"/>
    </location>
</feature>
<feature type="helix" evidence="6">
    <location>
        <begin position="188"/>
        <end position="214"/>
    </location>
</feature>
<feature type="helix" evidence="6">
    <location>
        <begin position="220"/>
        <end position="226"/>
    </location>
</feature>
<feature type="helix" evidence="6">
    <location>
        <begin position="231"/>
        <end position="245"/>
    </location>
</feature>
<feature type="helix" evidence="6">
    <location>
        <begin position="249"/>
        <end position="251"/>
    </location>
</feature>
<feature type="strand" evidence="6">
    <location>
        <begin position="253"/>
        <end position="255"/>
    </location>
</feature>
<feature type="strand" evidence="6">
    <location>
        <begin position="274"/>
        <end position="277"/>
    </location>
</feature>
<feature type="helix" evidence="6">
    <location>
        <begin position="279"/>
        <end position="283"/>
    </location>
</feature>
<feature type="strand" evidence="6">
    <location>
        <begin position="286"/>
        <end position="288"/>
    </location>
</feature>
<feature type="helix" evidence="6">
    <location>
        <begin position="292"/>
        <end position="302"/>
    </location>
</feature>
<feature type="helix" evidence="6">
    <location>
        <begin position="304"/>
        <end position="306"/>
    </location>
</feature>
<feature type="helix" evidence="6">
    <location>
        <begin position="315"/>
        <end position="325"/>
    </location>
</feature>
<feature type="helix" evidence="6">
    <location>
        <begin position="327"/>
        <end position="330"/>
    </location>
</feature>
<feature type="helix" evidence="6">
    <location>
        <begin position="334"/>
        <end position="342"/>
    </location>
</feature>
<reference key="1">
    <citation type="journal article" date="2002" name="J. Gen. Appl. Microbiol.">
        <title>PCR cloning and heterologous expression of cDNA encoding a peptidyl-Lys metalloendopeptidase precursor of Grifola frondosa.</title>
        <authorList>
            <person name="Saito T."/>
            <person name="Dohmae N."/>
            <person name="Tsujimoto M."/>
            <person name="Takio K."/>
        </authorList>
    </citation>
    <scope>NUCLEOTIDE SEQUENCE [MRNA]</scope>
    <scope>PROTEIN SEQUENCE OF 19-28; 96-105 AND 167-178</scope>
    <source>
        <strain>S.F. Gray</strain>
    </source>
</reference>
<reference key="2">
    <citation type="journal article" date="1997" name="J. Biol. Chem.">
        <title>Amino acid sequences of metalloendopeptidases specific for acyl-lysine bonds from Grifola frondosa and Pleurotus ostreatus fruiting bodies.</title>
        <authorList>
            <person name="Nonaka T."/>
            <person name="Dohmae N."/>
            <person name="Hashimoto Y."/>
            <person name="Takio K."/>
        </authorList>
    </citation>
    <scope>PROTEIN SEQUENCE OF 182-348</scope>
    <scope>GLYCOSYLATION AT THR-223</scope>
    <scope>MASS SPECTROMETRY</scope>
</reference>
<reference key="3">
    <citation type="journal article" date="1995" name="J. Biochem.">
        <title>Characterization of a thermostable lysine-specific metalloendopeptidase from the fruiting bodies of a basidiomycete, Grifola frondosa.</title>
        <authorList>
            <person name="Nonaka T."/>
            <person name="Ishikawa H."/>
            <person name="Tsumuraya Y."/>
            <person name="Hashimoto Y."/>
            <person name="Dohmae N."/>
            <person name="Takio K."/>
        </authorList>
    </citation>
    <scope>PROTEIN SEQUENCE OF 182-196</scope>
    <scope>BIOPHYSICOCHEMICAL PROPERTIES</scope>
    <scope>ZINC-BINDING</scope>
    <scope>ACTIVITY REGULATION</scope>
    <scope>BINDING TO BETA-GLUCANS AND CHITIN</scope>
</reference>
<reference key="4">
    <citation type="journal article" date="1998" name="J. Biochem.">
        <title>Kinetic characterization of lysine-specific metalloendopeptidases from Grifola frondosa and Pleurotus ostreatus fruiting bodies.</title>
        <authorList>
            <person name="Nonaka T."/>
            <person name="Hashimoto Y."/>
            <person name="Takio K."/>
        </authorList>
    </citation>
    <scope>SUBSTRATE SPECIFICITY</scope>
</reference>
<reference key="5">
    <citation type="journal article" date="2001" name="Acta Crystallogr. D">
        <title>Structure of a new 'aspzincin' metalloendopeptidase from Grifola frondosa: implications for the catalytic mechanism and substrate specificity based on several different crystal forms.</title>
        <authorList>
            <person name="Hori T."/>
            <person name="Kumasaka T."/>
            <person name="Yamamoto M."/>
            <person name="Nonaka N."/>
            <person name="Tanaka N."/>
            <person name="Hashimoto Y."/>
            <person name="Ueki U."/>
            <person name="Takio K."/>
        </authorList>
    </citation>
    <scope>X-RAY CRYSTALLOGRAPHY (1.6 ANGSTROMS) OF MATURE FORM IN COMPLEX WITH ZINC</scope>
    <scope>COFACTOR</scope>
    <scope>ACTIVE SITE</scope>
    <scope>DISULFIDE BONDS</scope>
</reference>
<accession>P81054</accession>
<accession>Q8WZH2</accession>
<protein>
    <recommendedName>
        <fullName>Peptidyl-Lys metalloendopeptidase</fullName>
        <shortName>MEP</shortName>
        <ecNumber>3.4.24.20</ecNumber>
    </recommendedName>
    <alternativeName>
        <fullName>GfMEP</fullName>
    </alternativeName>
</protein>
<dbReference type="EC" id="3.4.24.20"/>
<dbReference type="EMBL" id="AB076805">
    <property type="protein sequence ID" value="BAB82381.1"/>
    <property type="molecule type" value="mRNA"/>
</dbReference>
<dbReference type="PDB" id="1G12">
    <property type="method" value="X-ray"/>
    <property type="resolution" value="1.60 A"/>
    <property type="chains" value="A=182-348"/>
</dbReference>
<dbReference type="PDB" id="1GE5">
    <property type="method" value="X-ray"/>
    <property type="resolution" value="2.00 A"/>
    <property type="chains" value="A=182-348"/>
</dbReference>
<dbReference type="PDB" id="1GE6">
    <property type="method" value="X-ray"/>
    <property type="resolution" value="2.20 A"/>
    <property type="chains" value="A=182-348"/>
</dbReference>
<dbReference type="PDB" id="1GE7">
    <property type="method" value="X-ray"/>
    <property type="resolution" value="2.00 A"/>
    <property type="chains" value="A/B=182-348"/>
</dbReference>
<dbReference type="PDBsum" id="1G12"/>
<dbReference type="PDBsum" id="1GE5"/>
<dbReference type="PDBsum" id="1GE6"/>
<dbReference type="PDBsum" id="1GE7"/>
<dbReference type="SMR" id="P81054"/>
<dbReference type="MEROPS" id="M35.004"/>
<dbReference type="GlyCosmos" id="P81054">
    <property type="glycosylation" value="1 site, No reported glycans"/>
</dbReference>
<dbReference type="iPTMnet" id="P81054"/>
<dbReference type="KEGG" id="ag:BAB82381"/>
<dbReference type="BRENDA" id="3.4.24.20">
    <property type="organism ID" value="2512"/>
</dbReference>
<dbReference type="EvolutionaryTrace" id="P81054"/>
<dbReference type="GO" id="GO:0005576">
    <property type="term" value="C:extracellular region"/>
    <property type="evidence" value="ECO:0007669"/>
    <property type="project" value="UniProtKB-SubCell"/>
</dbReference>
<dbReference type="GO" id="GO:0046872">
    <property type="term" value="F:metal ion binding"/>
    <property type="evidence" value="ECO:0007669"/>
    <property type="project" value="UniProtKB-KW"/>
</dbReference>
<dbReference type="GO" id="GO:0004222">
    <property type="term" value="F:metalloendopeptidase activity"/>
    <property type="evidence" value="ECO:0007669"/>
    <property type="project" value="InterPro"/>
</dbReference>
<dbReference type="GO" id="GO:0006508">
    <property type="term" value="P:proteolysis"/>
    <property type="evidence" value="ECO:0007669"/>
    <property type="project" value="UniProtKB-KW"/>
</dbReference>
<dbReference type="CDD" id="cd11306">
    <property type="entry name" value="M35_peptidyl-Lys"/>
    <property type="match status" value="1"/>
</dbReference>
<dbReference type="Gene3D" id="2.60.40.2970">
    <property type="match status" value="1"/>
</dbReference>
<dbReference type="Gene3D" id="3.40.390.10">
    <property type="entry name" value="Collagenase (Catalytic Domain)"/>
    <property type="match status" value="1"/>
</dbReference>
<dbReference type="InterPro" id="IPR050414">
    <property type="entry name" value="Fungal_M35_metalloproteases"/>
</dbReference>
<dbReference type="InterPro" id="IPR029463">
    <property type="entry name" value="Lys_MEP"/>
</dbReference>
<dbReference type="InterPro" id="IPR034115">
    <property type="entry name" value="M35_peptidyl-Lys"/>
</dbReference>
<dbReference type="InterPro" id="IPR024079">
    <property type="entry name" value="MetalloPept_cat_dom_sf"/>
</dbReference>
<dbReference type="PANTHER" id="PTHR37016">
    <property type="match status" value="1"/>
</dbReference>
<dbReference type="PANTHER" id="PTHR37016:SF3">
    <property type="entry name" value="NEUTRAL PROTEASE 2-RELATED"/>
    <property type="match status" value="1"/>
</dbReference>
<dbReference type="Pfam" id="PF14521">
    <property type="entry name" value="Aspzincin_M35"/>
    <property type="match status" value="1"/>
</dbReference>
<dbReference type="SMART" id="SM01351">
    <property type="entry name" value="Aspzincin_M35"/>
    <property type="match status" value="1"/>
</dbReference>
<dbReference type="SUPFAM" id="SSF55486">
    <property type="entry name" value="Metalloproteases ('zincins'), catalytic domain"/>
    <property type="match status" value="1"/>
</dbReference>
<keyword id="KW-0002">3D-structure</keyword>
<keyword id="KW-0903">Direct protein sequencing</keyword>
<keyword id="KW-1015">Disulfide bond</keyword>
<keyword id="KW-0325">Glycoprotein</keyword>
<keyword id="KW-0378">Hydrolase</keyword>
<keyword id="KW-0479">Metal-binding</keyword>
<keyword id="KW-0482">Metalloprotease</keyword>
<keyword id="KW-0645">Protease</keyword>
<keyword id="KW-0964">Secreted</keyword>
<keyword id="KW-0732">Signal</keyword>
<keyword id="KW-0862">Zinc</keyword>
<keyword id="KW-0865">Zymogen</keyword>
<organism>
    <name type="scientific">Grifola frondosa</name>
    <name type="common">Maitake</name>
    <name type="synonym">Polyporus frondosus</name>
    <dbReference type="NCBI Taxonomy" id="5627"/>
    <lineage>
        <taxon>Eukaryota</taxon>
        <taxon>Fungi</taxon>
        <taxon>Dikarya</taxon>
        <taxon>Basidiomycota</taxon>
        <taxon>Agaricomycotina</taxon>
        <taxon>Agaricomycetes</taxon>
        <taxon>Polyporales</taxon>
        <taxon>Grifolaceae</taxon>
        <taxon>Grifola</taxon>
    </lineage>
</organism>
<comment type="catalytic activity">
    <reaction>
        <text>Preferential cleavage in proteins: -Xaa-|-Lys- (in which Xaa may be Pro).</text>
        <dbReference type="EC" id="3.4.24.20"/>
    </reaction>
</comment>
<comment type="cofactor">
    <cofactor evidence="1">
        <name>Zn(2+)</name>
        <dbReference type="ChEBI" id="CHEBI:29105"/>
    </cofactor>
    <text evidence="1">Binds 1 zinc ion per subunit.</text>
</comment>
<comment type="activity regulation">
    <text evidence="3">Inhibited by chelating agents such as EDTA and 1,10-phenanthroline.</text>
</comment>
<comment type="biophysicochemical properties">
    <phDependence>
        <text evidence="3">Optimum pH is 9.5. Active from pH 6 to pH 10.5. Stable from pH 5 to pH 10.</text>
    </phDependence>
    <temperatureDependence>
        <text evidence="3">Thermostable for 3 hours up to 80 degrees Celsius.</text>
    </temperatureDependence>
</comment>
<comment type="subcellular location">
    <subcellularLocation>
        <location evidence="5">Secreted</location>
    </subcellularLocation>
    <text>Binds strongly to beta-1,3-glucan and chitin, major polysaccharides constituting the fungal cell wall.</text>
</comment>
<comment type="mass spectrometry"/>
<comment type="similarity">
    <text evidence="5">Belongs to the peptidase M35 family.</text>
</comment>
<sequence>MFSSVMVALVSLAVAVSANPGLSLKVSGPEAVDGVNNLKVVTTITNTGDETLKLLNDPRGALHTMPTDTFAITNESGETPSFIGVKVKYVPSMAAKSTGENVFAVIAPGQSVNVEHDLSAAYNFTSSGAGTYALEALNVFNYIDPETNEPVEIWADAEAHTTAVSGKLAVVRATPTLTRPVTYNGCSSSEQSALAAAASAAQSYVAESLSYLQTHTAATPRYTTWFGSYISSRHSTVLQHYTDMNSNDFSSYSFDCTCTAAGTFAYVYPNRFGTVYLCGAFWKAPTTGTDSQAGTLVHESSHFTRNGGTKDYAYGQAAAKSLATMDPDKAVMNADNHEYFSENNPAQS</sequence>
<name>PLMP_GRIFR</name>